<proteinExistence type="inferred from homology"/>
<evidence type="ECO:0000255" key="1">
    <source>
        <dbReference type="HAMAP-Rule" id="MF_01331"/>
    </source>
</evidence>
<evidence type="ECO:0000305" key="2"/>
<reference key="1">
    <citation type="journal article" date="2006" name="Proc. Natl. Acad. Sci. U.S.A.">
        <title>Genome reduction in Leptospira borgpetersenii reflects limited transmission potential.</title>
        <authorList>
            <person name="Bulach D.M."/>
            <person name="Zuerner R.L."/>
            <person name="Wilson P."/>
            <person name="Seemann T."/>
            <person name="McGrath A."/>
            <person name="Cullen P.A."/>
            <person name="Davis J."/>
            <person name="Johnson M."/>
            <person name="Kuczek E."/>
            <person name="Alt D.P."/>
            <person name="Peterson-Burch B."/>
            <person name="Coppel R.L."/>
            <person name="Rood J.I."/>
            <person name="Davies J.K."/>
            <person name="Adler B."/>
        </authorList>
    </citation>
    <scope>NUCLEOTIDE SEQUENCE [LARGE SCALE GENOMIC DNA]</scope>
    <source>
        <strain>JB197</strain>
    </source>
</reference>
<comment type="function">
    <text evidence="1">This protein binds specifically to 23S rRNA; its binding is stimulated by other ribosomal proteins, e.g. L4, L17, and L20. It is important during the early stages of 50S assembly. It makes multiple contacts with different domains of the 23S rRNA in the assembled 50S subunit and ribosome (By similarity).</text>
</comment>
<comment type="function">
    <text evidence="1">The globular domain of the protein is located near the polypeptide exit tunnel on the outside of the subunit, while an extended beta-hairpin is found that lines the wall of the exit tunnel in the center of the 70S ribosome.</text>
</comment>
<comment type="subunit">
    <text evidence="1">Part of the 50S ribosomal subunit.</text>
</comment>
<comment type="similarity">
    <text evidence="1">Belongs to the universal ribosomal protein uL22 family.</text>
</comment>
<name>RL22_LEPBJ</name>
<keyword id="KW-0687">Ribonucleoprotein</keyword>
<keyword id="KW-0689">Ribosomal protein</keyword>
<keyword id="KW-0694">RNA-binding</keyword>
<keyword id="KW-0699">rRNA-binding</keyword>
<sequence>MEAKAVARFVRMSPRKVRLVADEIRGYAVGEALDILKFTNKRAIEPLTKVILSASANASVLNDKVDSNQLFIKKIYVDEGPIMKRFRPRARGRAARIRKRLSHITVVLSD</sequence>
<accession>Q04PU3</accession>
<organism>
    <name type="scientific">Leptospira borgpetersenii serovar Hardjo-bovis (strain JB197)</name>
    <dbReference type="NCBI Taxonomy" id="355277"/>
    <lineage>
        <taxon>Bacteria</taxon>
        <taxon>Pseudomonadati</taxon>
        <taxon>Spirochaetota</taxon>
        <taxon>Spirochaetia</taxon>
        <taxon>Leptospirales</taxon>
        <taxon>Leptospiraceae</taxon>
        <taxon>Leptospira</taxon>
    </lineage>
</organism>
<gene>
    <name evidence="1" type="primary">rplV</name>
    <name type="ordered locus">LBJ_2654</name>
</gene>
<protein>
    <recommendedName>
        <fullName evidence="1">Large ribosomal subunit protein uL22</fullName>
    </recommendedName>
    <alternativeName>
        <fullName evidence="2">50S ribosomal protein L22</fullName>
    </alternativeName>
</protein>
<feature type="chain" id="PRO_1000052598" description="Large ribosomal subunit protein uL22">
    <location>
        <begin position="1"/>
        <end position="110"/>
    </location>
</feature>
<dbReference type="EMBL" id="CP000350">
    <property type="protein sequence ID" value="ABJ77077.1"/>
    <property type="molecule type" value="Genomic_DNA"/>
</dbReference>
<dbReference type="RefSeq" id="WP_002628313.1">
    <property type="nucleotide sequence ID" value="NC_008510.1"/>
</dbReference>
<dbReference type="SMR" id="Q04PU3"/>
<dbReference type="GeneID" id="61172955"/>
<dbReference type="KEGG" id="lbj:LBJ_2654"/>
<dbReference type="HOGENOM" id="CLU_083987_3_3_12"/>
<dbReference type="Proteomes" id="UP000000656">
    <property type="component" value="Chromosome 1"/>
</dbReference>
<dbReference type="GO" id="GO:0022625">
    <property type="term" value="C:cytosolic large ribosomal subunit"/>
    <property type="evidence" value="ECO:0007669"/>
    <property type="project" value="TreeGrafter"/>
</dbReference>
<dbReference type="GO" id="GO:0019843">
    <property type="term" value="F:rRNA binding"/>
    <property type="evidence" value="ECO:0007669"/>
    <property type="project" value="UniProtKB-UniRule"/>
</dbReference>
<dbReference type="GO" id="GO:0003735">
    <property type="term" value="F:structural constituent of ribosome"/>
    <property type="evidence" value="ECO:0007669"/>
    <property type="project" value="InterPro"/>
</dbReference>
<dbReference type="GO" id="GO:0006412">
    <property type="term" value="P:translation"/>
    <property type="evidence" value="ECO:0007669"/>
    <property type="project" value="UniProtKB-UniRule"/>
</dbReference>
<dbReference type="CDD" id="cd00336">
    <property type="entry name" value="Ribosomal_L22"/>
    <property type="match status" value="1"/>
</dbReference>
<dbReference type="FunFam" id="3.90.470.10:FF:000011">
    <property type="entry name" value="50S ribosomal protein L22"/>
    <property type="match status" value="1"/>
</dbReference>
<dbReference type="Gene3D" id="3.90.470.10">
    <property type="entry name" value="Ribosomal protein L22/L17"/>
    <property type="match status" value="1"/>
</dbReference>
<dbReference type="HAMAP" id="MF_01331_B">
    <property type="entry name" value="Ribosomal_uL22_B"/>
    <property type="match status" value="1"/>
</dbReference>
<dbReference type="InterPro" id="IPR001063">
    <property type="entry name" value="Ribosomal_uL22"/>
</dbReference>
<dbReference type="InterPro" id="IPR005727">
    <property type="entry name" value="Ribosomal_uL22_bac/chlpt-type"/>
</dbReference>
<dbReference type="InterPro" id="IPR047867">
    <property type="entry name" value="Ribosomal_uL22_bac/org-type"/>
</dbReference>
<dbReference type="InterPro" id="IPR018260">
    <property type="entry name" value="Ribosomal_uL22_CS"/>
</dbReference>
<dbReference type="InterPro" id="IPR036394">
    <property type="entry name" value="Ribosomal_uL22_sf"/>
</dbReference>
<dbReference type="NCBIfam" id="TIGR01044">
    <property type="entry name" value="rplV_bact"/>
    <property type="match status" value="1"/>
</dbReference>
<dbReference type="PANTHER" id="PTHR13501">
    <property type="entry name" value="CHLOROPLAST 50S RIBOSOMAL PROTEIN L22-RELATED"/>
    <property type="match status" value="1"/>
</dbReference>
<dbReference type="PANTHER" id="PTHR13501:SF8">
    <property type="entry name" value="LARGE RIBOSOMAL SUBUNIT PROTEIN UL22M"/>
    <property type="match status" value="1"/>
</dbReference>
<dbReference type="Pfam" id="PF00237">
    <property type="entry name" value="Ribosomal_L22"/>
    <property type="match status" value="1"/>
</dbReference>
<dbReference type="SUPFAM" id="SSF54843">
    <property type="entry name" value="Ribosomal protein L22"/>
    <property type="match status" value="1"/>
</dbReference>
<dbReference type="PROSITE" id="PS00464">
    <property type="entry name" value="RIBOSOMAL_L22"/>
    <property type="match status" value="1"/>
</dbReference>